<proteinExistence type="inferred from homology"/>
<reference key="1">
    <citation type="journal article" date="2005" name="Nat. Biotechnol.">
        <title>The complete genome sequence of the meat-borne lactic acid bacterium Lactobacillus sakei 23K.</title>
        <authorList>
            <person name="Chaillou S."/>
            <person name="Champomier-Verges M.-C."/>
            <person name="Cornet M."/>
            <person name="Crutz-Le Coq A.-M."/>
            <person name="Dudez A.-M."/>
            <person name="Martin V."/>
            <person name="Beaufils S."/>
            <person name="Darbon-Rongere E."/>
            <person name="Bossy R."/>
            <person name="Loux V."/>
            <person name="Zagorec M."/>
        </authorList>
    </citation>
    <scope>NUCLEOTIDE SEQUENCE [LARGE SCALE GENOMIC DNA]</scope>
    <source>
        <strain>23K</strain>
    </source>
</reference>
<dbReference type="EMBL" id="CR936503">
    <property type="protein sequence ID" value="CAI55540.1"/>
    <property type="molecule type" value="Genomic_DNA"/>
</dbReference>
<dbReference type="RefSeq" id="WP_011374933.1">
    <property type="nucleotide sequence ID" value="NC_007576.1"/>
</dbReference>
<dbReference type="SMR" id="Q38W93"/>
<dbReference type="STRING" id="314315.LCA_1236"/>
<dbReference type="KEGG" id="lsa:LCA_1236"/>
<dbReference type="eggNOG" id="COG0443">
    <property type="taxonomic scope" value="Bacteria"/>
</dbReference>
<dbReference type="HOGENOM" id="CLU_005965_2_4_9"/>
<dbReference type="OrthoDB" id="9766019at2"/>
<dbReference type="Proteomes" id="UP000002707">
    <property type="component" value="Chromosome"/>
</dbReference>
<dbReference type="GO" id="GO:0005524">
    <property type="term" value="F:ATP binding"/>
    <property type="evidence" value="ECO:0007669"/>
    <property type="project" value="UniProtKB-UniRule"/>
</dbReference>
<dbReference type="GO" id="GO:0140662">
    <property type="term" value="F:ATP-dependent protein folding chaperone"/>
    <property type="evidence" value="ECO:0007669"/>
    <property type="project" value="InterPro"/>
</dbReference>
<dbReference type="GO" id="GO:0051082">
    <property type="term" value="F:unfolded protein binding"/>
    <property type="evidence" value="ECO:0007669"/>
    <property type="project" value="InterPro"/>
</dbReference>
<dbReference type="CDD" id="cd10234">
    <property type="entry name" value="ASKHA_NBD_HSP70_DnaK-like"/>
    <property type="match status" value="1"/>
</dbReference>
<dbReference type="FunFam" id="2.60.34.10:FF:000014">
    <property type="entry name" value="Chaperone protein DnaK HSP70"/>
    <property type="match status" value="1"/>
</dbReference>
<dbReference type="FunFam" id="3.30.420.40:FF:000071">
    <property type="entry name" value="Molecular chaperone DnaK"/>
    <property type="match status" value="1"/>
</dbReference>
<dbReference type="FunFam" id="3.90.640.10:FF:000003">
    <property type="entry name" value="Molecular chaperone DnaK"/>
    <property type="match status" value="1"/>
</dbReference>
<dbReference type="Gene3D" id="1.20.1270.10">
    <property type="match status" value="1"/>
</dbReference>
<dbReference type="Gene3D" id="3.30.420.40">
    <property type="match status" value="2"/>
</dbReference>
<dbReference type="Gene3D" id="3.90.640.10">
    <property type="entry name" value="Actin, Chain A, domain 4"/>
    <property type="match status" value="1"/>
</dbReference>
<dbReference type="Gene3D" id="2.60.34.10">
    <property type="entry name" value="Substrate Binding Domain Of DNAk, Chain A, domain 1"/>
    <property type="match status" value="1"/>
</dbReference>
<dbReference type="HAMAP" id="MF_00332">
    <property type="entry name" value="DnaK"/>
    <property type="match status" value="1"/>
</dbReference>
<dbReference type="InterPro" id="IPR043129">
    <property type="entry name" value="ATPase_NBD"/>
</dbReference>
<dbReference type="InterPro" id="IPR012725">
    <property type="entry name" value="Chaperone_DnaK"/>
</dbReference>
<dbReference type="InterPro" id="IPR018181">
    <property type="entry name" value="Heat_shock_70_CS"/>
</dbReference>
<dbReference type="InterPro" id="IPR029048">
    <property type="entry name" value="HSP70_C_sf"/>
</dbReference>
<dbReference type="InterPro" id="IPR029047">
    <property type="entry name" value="HSP70_peptide-bd_sf"/>
</dbReference>
<dbReference type="InterPro" id="IPR013126">
    <property type="entry name" value="Hsp_70_fam"/>
</dbReference>
<dbReference type="NCBIfam" id="NF001413">
    <property type="entry name" value="PRK00290.1"/>
    <property type="match status" value="1"/>
</dbReference>
<dbReference type="NCBIfam" id="TIGR02350">
    <property type="entry name" value="prok_dnaK"/>
    <property type="match status" value="1"/>
</dbReference>
<dbReference type="PANTHER" id="PTHR19375">
    <property type="entry name" value="HEAT SHOCK PROTEIN 70KDA"/>
    <property type="match status" value="1"/>
</dbReference>
<dbReference type="Pfam" id="PF00012">
    <property type="entry name" value="HSP70"/>
    <property type="match status" value="1"/>
</dbReference>
<dbReference type="PRINTS" id="PR00301">
    <property type="entry name" value="HEATSHOCK70"/>
</dbReference>
<dbReference type="SUPFAM" id="SSF53067">
    <property type="entry name" value="Actin-like ATPase domain"/>
    <property type="match status" value="2"/>
</dbReference>
<dbReference type="SUPFAM" id="SSF100934">
    <property type="entry name" value="Heat shock protein 70kD (HSP70), C-terminal subdomain"/>
    <property type="match status" value="1"/>
</dbReference>
<dbReference type="SUPFAM" id="SSF100920">
    <property type="entry name" value="Heat shock protein 70kD (HSP70), peptide-binding domain"/>
    <property type="match status" value="1"/>
</dbReference>
<dbReference type="PROSITE" id="PS00297">
    <property type="entry name" value="HSP70_1"/>
    <property type="match status" value="1"/>
</dbReference>
<dbReference type="PROSITE" id="PS00329">
    <property type="entry name" value="HSP70_2"/>
    <property type="match status" value="1"/>
</dbReference>
<dbReference type="PROSITE" id="PS01036">
    <property type="entry name" value="HSP70_3"/>
    <property type="match status" value="1"/>
</dbReference>
<keyword id="KW-0067">ATP-binding</keyword>
<keyword id="KW-0143">Chaperone</keyword>
<keyword id="KW-0547">Nucleotide-binding</keyword>
<keyword id="KW-0597">Phosphoprotein</keyword>
<keyword id="KW-1185">Reference proteome</keyword>
<keyword id="KW-0346">Stress response</keyword>
<comment type="function">
    <text evidence="1">Acts as a chaperone.</text>
</comment>
<comment type="induction">
    <text evidence="1">By stress conditions e.g. heat shock.</text>
</comment>
<comment type="similarity">
    <text evidence="1">Belongs to the heat shock protein 70 family.</text>
</comment>
<organism>
    <name type="scientific">Latilactobacillus sakei subsp. sakei (strain 23K)</name>
    <name type="common">Lactobacillus sakei subsp. sakei</name>
    <dbReference type="NCBI Taxonomy" id="314315"/>
    <lineage>
        <taxon>Bacteria</taxon>
        <taxon>Bacillati</taxon>
        <taxon>Bacillota</taxon>
        <taxon>Bacilli</taxon>
        <taxon>Lactobacillales</taxon>
        <taxon>Lactobacillaceae</taxon>
        <taxon>Latilactobacillus</taxon>
    </lineage>
</organism>
<accession>Q38W93</accession>
<name>DNAK_LATSS</name>
<protein>
    <recommendedName>
        <fullName evidence="1">Chaperone protein DnaK</fullName>
    </recommendedName>
    <alternativeName>
        <fullName evidence="1">HSP70</fullName>
    </alternativeName>
    <alternativeName>
        <fullName evidence="1">Heat shock 70 kDa protein</fullName>
    </alternativeName>
    <alternativeName>
        <fullName evidence="1">Heat shock protein 70</fullName>
    </alternativeName>
</protein>
<sequence>MSKVIGIDLGTTNSAVAVLEGGQPKIITNPEGARTTPSVVSFKNGEIQVGEVAKRQAITNPDTIASIKRHIGEAGYKVTVGDKSYTPQEVSAMILQYIKKFAEDYLGEEVTEAVITVPAYFNDSQRQATKDAGKIAGLDVKRIINEPTASALAYGLDKTETDEKVLVYDLGGGTFDVSVLELGDGVFQVLSTNGDTRLGGDDFDEAIMNWLVENFKSDNGIDLSKDKMAMQRLKDAAEKAKKDLSGVTSTQISLPFISAGENGPLHLEMTLSRTEFDRLTSDLVDRTKAPVMNALKDAGLDANEIDKVILNGGSTRIPAVQEAVKNWTGKEPDHSINPDEAVALGAAVQGGVISGDVKDVVLLDVTPLSLGIETMGGVFTKLIDRNTTIPTSKAQTFSTAADNQPAVDIHVLQGERPMAADNKTLGRFQLTDIPAAPRGVPQIEVKFDIDKNGIVNVSAKDLGTNKEQKITIKSNSGLSDEEIDRMMKEAQENEEADTKRKEEVDLKNDVDQLIFQTDKTLKELEGKVSDEELQKAKDAKEELVKAQQENNLEDMKTKRDALSEIVQELTVKLYQQAQEAQQAAGGAEGNATDAKTDDGTVDGDFEEVKDDKE</sequence>
<evidence type="ECO:0000255" key="1">
    <source>
        <dbReference type="HAMAP-Rule" id="MF_00332"/>
    </source>
</evidence>
<evidence type="ECO:0000256" key="2">
    <source>
        <dbReference type="SAM" id="MobiDB-lite"/>
    </source>
</evidence>
<feature type="chain" id="PRO_0000225972" description="Chaperone protein DnaK">
    <location>
        <begin position="1"/>
        <end position="613"/>
    </location>
</feature>
<feature type="region of interest" description="Disordered" evidence="2">
    <location>
        <begin position="577"/>
        <end position="613"/>
    </location>
</feature>
<feature type="compositionally biased region" description="Acidic residues" evidence="2">
    <location>
        <begin position="599"/>
        <end position="613"/>
    </location>
</feature>
<feature type="modified residue" description="Phosphothreonine; by autocatalysis" evidence="1">
    <location>
        <position position="174"/>
    </location>
</feature>
<gene>
    <name evidence="1" type="primary">dnaK</name>
    <name type="ordered locus">LCA_1236</name>
</gene>